<evidence type="ECO:0000255" key="1">
    <source>
        <dbReference type="HAMAP-Rule" id="MF_01825"/>
    </source>
</evidence>
<protein>
    <recommendedName>
        <fullName evidence="1">Erythronate-4-phosphate dehydrogenase</fullName>
        <ecNumber evidence="1">1.1.1.290</ecNumber>
    </recommendedName>
</protein>
<keyword id="KW-0963">Cytoplasm</keyword>
<keyword id="KW-0520">NAD</keyword>
<keyword id="KW-0560">Oxidoreductase</keyword>
<keyword id="KW-0664">Pyridoxine biosynthesis</keyword>
<keyword id="KW-1185">Reference proteome</keyword>
<name>PDXB_BACTN</name>
<reference key="1">
    <citation type="journal article" date="2003" name="Science">
        <title>A genomic view of the human-Bacteroides thetaiotaomicron symbiosis.</title>
        <authorList>
            <person name="Xu J."/>
            <person name="Bjursell M.K."/>
            <person name="Himrod J."/>
            <person name="Deng S."/>
            <person name="Carmichael L.K."/>
            <person name="Chiang H.C."/>
            <person name="Hooper L.V."/>
            <person name="Gordon J.I."/>
        </authorList>
    </citation>
    <scope>NUCLEOTIDE SEQUENCE [LARGE SCALE GENOMIC DNA]</scope>
    <source>
        <strain>ATCC 29148 / DSM 2079 / JCM 5827 / CCUG 10774 / NCTC 10582 / VPI-5482 / E50</strain>
    </source>
</reference>
<gene>
    <name evidence="1" type="primary">pdxB</name>
    <name type="ordered locus">BT_3361</name>
</gene>
<organism>
    <name type="scientific">Bacteroides thetaiotaomicron (strain ATCC 29148 / DSM 2079 / JCM 5827 / CCUG 10774 / NCTC 10582 / VPI-5482 / E50)</name>
    <dbReference type="NCBI Taxonomy" id="226186"/>
    <lineage>
        <taxon>Bacteria</taxon>
        <taxon>Pseudomonadati</taxon>
        <taxon>Bacteroidota</taxon>
        <taxon>Bacteroidia</taxon>
        <taxon>Bacteroidales</taxon>
        <taxon>Bacteroidaceae</taxon>
        <taxon>Bacteroides</taxon>
    </lineage>
</organism>
<accession>Q8A2E4</accession>
<sequence>MKIIIDDKIPYIKEAAEKIADEAIYAPGKDFTRELVQDADALIIRTRTHCNRELLEGSKVKFIATATIGFDHIDTEYCKQAGIEWANAPGCNSASVAQYIQSSLLIWKSLRNKKPDELTIGIIGVGNVGSKVAKVAQDFGMRVLLNDLPREEKEGNITFTSLEKIAEECDIITFHVPLYKEGKYKTYHLADGNFFRSLQRKPVVINTSRGEVIETNALLEAINNGIISDAVIDVWEHEPEINRELLEKVLIGTPHIAGYSADGKANATRMSLDSICRFFHLSATYEITPPAPSSPLIEAKDREEALLKMYNPIEDSNRLKSHPELFETLRGDYPLRREEKAYNIIGIK</sequence>
<feature type="chain" id="PRO_0000075972" description="Erythronate-4-phosphate dehydrogenase">
    <location>
        <begin position="1"/>
        <end position="348"/>
    </location>
</feature>
<feature type="active site" evidence="1">
    <location>
        <position position="209"/>
    </location>
</feature>
<feature type="active site" evidence="1">
    <location>
        <position position="238"/>
    </location>
</feature>
<feature type="active site" description="Proton donor" evidence="1">
    <location>
        <position position="255"/>
    </location>
</feature>
<feature type="binding site" evidence="1">
    <location>
        <position position="46"/>
    </location>
    <ligand>
        <name>substrate</name>
    </ligand>
</feature>
<feature type="binding site" evidence="1">
    <location>
        <position position="67"/>
    </location>
    <ligand>
        <name>substrate</name>
    </ligand>
</feature>
<feature type="binding site" evidence="1">
    <location>
        <position position="147"/>
    </location>
    <ligand>
        <name>NAD(+)</name>
        <dbReference type="ChEBI" id="CHEBI:57540"/>
    </ligand>
</feature>
<feature type="binding site" evidence="1">
    <location>
        <position position="233"/>
    </location>
    <ligand>
        <name>NAD(+)</name>
        <dbReference type="ChEBI" id="CHEBI:57540"/>
    </ligand>
</feature>
<feature type="binding site" evidence="1">
    <location>
        <position position="258"/>
    </location>
    <ligand>
        <name>NAD(+)</name>
        <dbReference type="ChEBI" id="CHEBI:57540"/>
    </ligand>
</feature>
<feature type="binding site" evidence="1">
    <location>
        <position position="259"/>
    </location>
    <ligand>
        <name>substrate</name>
    </ligand>
</feature>
<proteinExistence type="inferred from homology"/>
<comment type="function">
    <text evidence="1">Catalyzes the oxidation of erythronate-4-phosphate to 3-hydroxy-2-oxo-4-phosphonooxybutanoate.</text>
</comment>
<comment type="catalytic activity">
    <reaction evidence="1">
        <text>4-phospho-D-erythronate + NAD(+) = (R)-3-hydroxy-2-oxo-4-phosphooxybutanoate + NADH + H(+)</text>
        <dbReference type="Rhea" id="RHEA:18829"/>
        <dbReference type="ChEBI" id="CHEBI:15378"/>
        <dbReference type="ChEBI" id="CHEBI:57540"/>
        <dbReference type="ChEBI" id="CHEBI:57945"/>
        <dbReference type="ChEBI" id="CHEBI:58538"/>
        <dbReference type="ChEBI" id="CHEBI:58766"/>
        <dbReference type="EC" id="1.1.1.290"/>
    </reaction>
</comment>
<comment type="pathway">
    <text evidence="1">Cofactor biosynthesis; pyridoxine 5'-phosphate biosynthesis; pyridoxine 5'-phosphate from D-erythrose 4-phosphate: step 2/5.</text>
</comment>
<comment type="subunit">
    <text evidence="1">Homodimer.</text>
</comment>
<comment type="subcellular location">
    <subcellularLocation>
        <location evidence="1">Cytoplasm</location>
    </subcellularLocation>
</comment>
<comment type="similarity">
    <text evidence="1">Belongs to the D-isomer specific 2-hydroxyacid dehydrogenase family. PdxB subfamily.</text>
</comment>
<dbReference type="EC" id="1.1.1.290" evidence="1"/>
<dbReference type="EMBL" id="AE015928">
    <property type="protein sequence ID" value="AAO78467.1"/>
    <property type="molecule type" value="Genomic_DNA"/>
</dbReference>
<dbReference type="RefSeq" id="NP_812273.1">
    <property type="nucleotide sequence ID" value="NC_004663.1"/>
</dbReference>
<dbReference type="RefSeq" id="WP_011108789.1">
    <property type="nucleotide sequence ID" value="NC_004663.1"/>
</dbReference>
<dbReference type="SMR" id="Q8A2E4"/>
<dbReference type="FunCoup" id="Q8A2E4">
    <property type="interactions" value="96"/>
</dbReference>
<dbReference type="STRING" id="226186.BT_3361"/>
<dbReference type="PaxDb" id="226186-BT_3361"/>
<dbReference type="EnsemblBacteria" id="AAO78467">
    <property type="protein sequence ID" value="AAO78467"/>
    <property type="gene ID" value="BT_3361"/>
</dbReference>
<dbReference type="GeneID" id="60924540"/>
<dbReference type="KEGG" id="bth:BT_3361"/>
<dbReference type="PATRIC" id="fig|226186.12.peg.3429"/>
<dbReference type="eggNOG" id="COG0111">
    <property type="taxonomic scope" value="Bacteria"/>
</dbReference>
<dbReference type="HOGENOM" id="CLU_019796_4_0_10"/>
<dbReference type="InParanoid" id="Q8A2E4"/>
<dbReference type="OrthoDB" id="1522997at2"/>
<dbReference type="UniPathway" id="UPA00244">
    <property type="reaction ID" value="UER00310"/>
</dbReference>
<dbReference type="Proteomes" id="UP000001414">
    <property type="component" value="Chromosome"/>
</dbReference>
<dbReference type="GO" id="GO:0005737">
    <property type="term" value="C:cytoplasm"/>
    <property type="evidence" value="ECO:0007669"/>
    <property type="project" value="UniProtKB-SubCell"/>
</dbReference>
<dbReference type="GO" id="GO:0033711">
    <property type="term" value="F:4-phosphoerythronate dehydrogenase activity"/>
    <property type="evidence" value="ECO:0007669"/>
    <property type="project" value="UniProtKB-EC"/>
</dbReference>
<dbReference type="GO" id="GO:0051287">
    <property type="term" value="F:NAD binding"/>
    <property type="evidence" value="ECO:0007669"/>
    <property type="project" value="InterPro"/>
</dbReference>
<dbReference type="GO" id="GO:0008615">
    <property type="term" value="P:pyridoxine biosynthetic process"/>
    <property type="evidence" value="ECO:0007669"/>
    <property type="project" value="UniProtKB-UniRule"/>
</dbReference>
<dbReference type="CDD" id="cd12158">
    <property type="entry name" value="ErythrP_dh"/>
    <property type="match status" value="1"/>
</dbReference>
<dbReference type="Gene3D" id="3.30.1370.170">
    <property type="match status" value="1"/>
</dbReference>
<dbReference type="Gene3D" id="3.40.50.720">
    <property type="entry name" value="NAD(P)-binding Rossmann-like Domain"/>
    <property type="match status" value="2"/>
</dbReference>
<dbReference type="HAMAP" id="MF_01825">
    <property type="entry name" value="PdxB"/>
    <property type="match status" value="1"/>
</dbReference>
<dbReference type="InterPro" id="IPR050223">
    <property type="entry name" value="D-isomer_2-hydroxyacid_DH"/>
</dbReference>
<dbReference type="InterPro" id="IPR006139">
    <property type="entry name" value="D-isomer_2_OHA_DH_cat_dom"/>
</dbReference>
<dbReference type="InterPro" id="IPR029753">
    <property type="entry name" value="D-isomer_DH_CS"/>
</dbReference>
<dbReference type="InterPro" id="IPR006140">
    <property type="entry name" value="D-isomer_DH_NAD-bd"/>
</dbReference>
<dbReference type="InterPro" id="IPR020921">
    <property type="entry name" value="Erythronate-4-P_DHase"/>
</dbReference>
<dbReference type="InterPro" id="IPR036291">
    <property type="entry name" value="NAD(P)-bd_dom_sf"/>
</dbReference>
<dbReference type="InterPro" id="IPR038251">
    <property type="entry name" value="PdxB_dimer_sf"/>
</dbReference>
<dbReference type="NCBIfam" id="NF001309">
    <property type="entry name" value="PRK00257.1"/>
    <property type="match status" value="1"/>
</dbReference>
<dbReference type="PANTHER" id="PTHR10996">
    <property type="entry name" value="2-HYDROXYACID DEHYDROGENASE-RELATED"/>
    <property type="match status" value="1"/>
</dbReference>
<dbReference type="PANTHER" id="PTHR10996:SF283">
    <property type="entry name" value="GLYOXYLATE_HYDROXYPYRUVATE REDUCTASE B"/>
    <property type="match status" value="1"/>
</dbReference>
<dbReference type="Pfam" id="PF00389">
    <property type="entry name" value="2-Hacid_dh"/>
    <property type="match status" value="1"/>
</dbReference>
<dbReference type="Pfam" id="PF02826">
    <property type="entry name" value="2-Hacid_dh_C"/>
    <property type="match status" value="1"/>
</dbReference>
<dbReference type="SUPFAM" id="SSF52283">
    <property type="entry name" value="Formate/glycerate dehydrogenase catalytic domain-like"/>
    <property type="match status" value="1"/>
</dbReference>
<dbReference type="SUPFAM" id="SSF51735">
    <property type="entry name" value="NAD(P)-binding Rossmann-fold domains"/>
    <property type="match status" value="1"/>
</dbReference>
<dbReference type="PROSITE" id="PS00671">
    <property type="entry name" value="D_2_HYDROXYACID_DH_3"/>
    <property type="match status" value="1"/>
</dbReference>